<dbReference type="EC" id="2.3.3.21" evidence="1"/>
<dbReference type="EMBL" id="BA000022">
    <property type="protein sequence ID" value="BAA18363.1"/>
    <property type="molecule type" value="Genomic_DNA"/>
</dbReference>
<dbReference type="PIR" id="S75904">
    <property type="entry name" value="S75904"/>
</dbReference>
<dbReference type="SMR" id="P74269"/>
<dbReference type="IntAct" id="P74269">
    <property type="interactions" value="3"/>
</dbReference>
<dbReference type="STRING" id="1148.gene:10499239"/>
<dbReference type="PaxDb" id="1148-1653449"/>
<dbReference type="EnsemblBacteria" id="BAA18363">
    <property type="protein sequence ID" value="BAA18363"/>
    <property type="gene ID" value="BAA18363"/>
</dbReference>
<dbReference type="KEGG" id="syn:sll1564"/>
<dbReference type="eggNOG" id="COG0119">
    <property type="taxonomic scope" value="Bacteria"/>
</dbReference>
<dbReference type="InParanoid" id="P74269"/>
<dbReference type="PhylomeDB" id="P74269"/>
<dbReference type="UniPathway" id="UPA00047">
    <property type="reaction ID" value="UER00066"/>
</dbReference>
<dbReference type="Proteomes" id="UP000001425">
    <property type="component" value="Chromosome"/>
</dbReference>
<dbReference type="GO" id="GO:0043714">
    <property type="term" value="F:(R)-citramalate synthase activity"/>
    <property type="evidence" value="ECO:0007669"/>
    <property type="project" value="RHEA"/>
</dbReference>
<dbReference type="GO" id="GO:0003852">
    <property type="term" value="F:2-isopropylmalate synthase activity"/>
    <property type="evidence" value="ECO:0007669"/>
    <property type="project" value="InterPro"/>
</dbReference>
<dbReference type="GO" id="GO:0009097">
    <property type="term" value="P:isoleucine biosynthetic process"/>
    <property type="evidence" value="ECO:0007669"/>
    <property type="project" value="UniProtKB-UniPathway"/>
</dbReference>
<dbReference type="GO" id="GO:0009098">
    <property type="term" value="P:L-leucine biosynthetic process"/>
    <property type="evidence" value="ECO:0007669"/>
    <property type="project" value="InterPro"/>
</dbReference>
<dbReference type="CDD" id="cd07941">
    <property type="entry name" value="DRE_TIM_LeuA3"/>
    <property type="match status" value="1"/>
</dbReference>
<dbReference type="Gene3D" id="1.10.238.260">
    <property type="match status" value="1"/>
</dbReference>
<dbReference type="Gene3D" id="3.30.160.270">
    <property type="match status" value="1"/>
</dbReference>
<dbReference type="Gene3D" id="3.20.20.70">
    <property type="entry name" value="Aldolase class I"/>
    <property type="match status" value="1"/>
</dbReference>
<dbReference type="InterPro" id="IPR013709">
    <property type="entry name" value="2-isopropylmalate_synth_dimer"/>
</dbReference>
<dbReference type="InterPro" id="IPR002034">
    <property type="entry name" value="AIPM/Hcit_synth_CS"/>
</dbReference>
<dbReference type="InterPro" id="IPR013785">
    <property type="entry name" value="Aldolase_TIM"/>
</dbReference>
<dbReference type="InterPro" id="IPR005675">
    <property type="entry name" value="Citramal_synthase"/>
</dbReference>
<dbReference type="InterPro" id="IPR054691">
    <property type="entry name" value="LeuA/HCS_post-cat"/>
</dbReference>
<dbReference type="InterPro" id="IPR036230">
    <property type="entry name" value="LeuA_allosteric_dom_sf"/>
</dbReference>
<dbReference type="InterPro" id="IPR000891">
    <property type="entry name" value="PYR_CT"/>
</dbReference>
<dbReference type="NCBIfam" id="TIGR00977">
    <property type="entry name" value="citramal_synth"/>
    <property type="match status" value="1"/>
</dbReference>
<dbReference type="PANTHER" id="PTHR43538:SF1">
    <property type="entry name" value="(R)-CITRAMALATE SYNTHASE"/>
    <property type="match status" value="1"/>
</dbReference>
<dbReference type="PANTHER" id="PTHR43538">
    <property type="entry name" value="ALPHA-IPM SYNTHASE/HOMOCITRATE SYNTHASE"/>
    <property type="match status" value="1"/>
</dbReference>
<dbReference type="Pfam" id="PF22617">
    <property type="entry name" value="HCS_D2"/>
    <property type="match status" value="1"/>
</dbReference>
<dbReference type="Pfam" id="PF00682">
    <property type="entry name" value="HMGL-like"/>
    <property type="match status" value="1"/>
</dbReference>
<dbReference type="Pfam" id="PF08502">
    <property type="entry name" value="LeuA_dimer"/>
    <property type="match status" value="1"/>
</dbReference>
<dbReference type="SMART" id="SM00917">
    <property type="entry name" value="LeuA_dimer"/>
    <property type="match status" value="1"/>
</dbReference>
<dbReference type="SUPFAM" id="SSF110921">
    <property type="entry name" value="2-isopropylmalate synthase LeuA, allosteric (dimerisation) domain"/>
    <property type="match status" value="1"/>
</dbReference>
<dbReference type="SUPFAM" id="SSF51569">
    <property type="entry name" value="Aldolase"/>
    <property type="match status" value="1"/>
</dbReference>
<dbReference type="PROSITE" id="PS00815">
    <property type="entry name" value="AIPM_HOMOCIT_SYNTH_1"/>
    <property type="match status" value="1"/>
</dbReference>
<dbReference type="PROSITE" id="PS00816">
    <property type="entry name" value="AIPM_HOMOCIT_SYNTH_2"/>
    <property type="match status" value="1"/>
</dbReference>
<dbReference type="PROSITE" id="PS50991">
    <property type="entry name" value="PYR_CT"/>
    <property type="match status" value="1"/>
</dbReference>
<evidence type="ECO:0000250" key="1">
    <source>
        <dbReference type="UniProtKB" id="Q74C76"/>
    </source>
</evidence>
<evidence type="ECO:0000255" key="2">
    <source>
        <dbReference type="PROSITE-ProRule" id="PRU01151"/>
    </source>
</evidence>
<evidence type="ECO:0000305" key="3"/>
<name>CIMA_SYNY3</name>
<accession>P74269</accession>
<sequence length="547" mass="59820">MATKKTSLWLYDTTLRDGAQREGISLSLTDKLTIARRLDQLGIPFIEGGWPGANPKDVQFFWQLQEEPLEQAEIVAFCSTRRPHKAVETDKMLQAILSAGTRWVTIFGKSWDLHVLEGLQTSLAENLAMISDTIAYLRSQGRRVIYDAEHWFDGYRANPDYALATLATAQQAGAEWLVMCDTNGGTLPGQISEITTKVRRSLGLDGQSDRQPQLGIHAHNDSGTAVANSLLAVEAGATMVQGTINGYGERCGNANLCTLIPNLQLKLDYDCIEPEKLAHLTSTSRLISEIVNLAPDDHAPFVGRSAFAHKGGIHVSAVQRNPFTYEHIAPNLVGNERRIVVSEQAGLSNVLSKAELFGIALDRQNPACRTILATLKDLEQQGYQFEAAEASFELLMRQAMGDRQPLFLVQGFQVHCDLLTPAENPAYRNALATVKVTVNGQNILEVAEGNGPVSALDQALRKALTRFYPQIADFHLTDYKVRILDGGAGTSAKTRVLVESSNGDRRWTTVGVSGNILEASYQAVVEGIEYGLRLLTCGLTNQEAISS</sequence>
<protein>
    <recommendedName>
        <fullName evidence="3">(R)-citramalate synthase</fullName>
        <ecNumber evidence="1">2.3.3.21</ecNumber>
    </recommendedName>
</protein>
<comment type="function">
    <text evidence="1">Catalyzes the condensation of pyruvate and acetyl-coenzyme A to form (R)-citramalate.</text>
</comment>
<comment type="catalytic activity">
    <reaction evidence="1">
        <text>pyruvate + acetyl-CoA + H2O = (3R)-citramalate + CoA + H(+)</text>
        <dbReference type="Rhea" id="RHEA:19045"/>
        <dbReference type="ChEBI" id="CHEBI:15361"/>
        <dbReference type="ChEBI" id="CHEBI:15377"/>
        <dbReference type="ChEBI" id="CHEBI:15378"/>
        <dbReference type="ChEBI" id="CHEBI:30934"/>
        <dbReference type="ChEBI" id="CHEBI:57287"/>
        <dbReference type="ChEBI" id="CHEBI:57288"/>
        <dbReference type="EC" id="2.3.3.21"/>
    </reaction>
</comment>
<comment type="pathway">
    <text evidence="1">Amino-acid biosynthesis; L-isoleucine biosynthesis; 2-oxobutanoate from pyruvate: step 1/3.</text>
</comment>
<comment type="similarity">
    <text evidence="3">Belongs to the alpha-IPM synthase/homocitrate synthase family.</text>
</comment>
<proteinExistence type="inferred from homology"/>
<feature type="chain" id="PRO_0000140471" description="(R)-citramalate synthase">
    <location>
        <begin position="1"/>
        <end position="547"/>
    </location>
</feature>
<feature type="domain" description="Pyruvate carboxyltransferase" evidence="2">
    <location>
        <begin position="8"/>
        <end position="278"/>
    </location>
</feature>
<keyword id="KW-0028">Amino-acid biosynthesis</keyword>
<keyword id="KW-0100">Branched-chain amino acid biosynthesis</keyword>
<keyword id="KW-0412">Isoleucine biosynthesis</keyword>
<keyword id="KW-1185">Reference proteome</keyword>
<keyword id="KW-0808">Transferase</keyword>
<gene>
    <name evidence="3" type="primary">cimA</name>
    <name type="ordered locus">sll1564</name>
</gene>
<organism>
    <name type="scientific">Synechocystis sp. (strain ATCC 27184 / PCC 6803 / Kazusa)</name>
    <dbReference type="NCBI Taxonomy" id="1111708"/>
    <lineage>
        <taxon>Bacteria</taxon>
        <taxon>Bacillati</taxon>
        <taxon>Cyanobacteriota</taxon>
        <taxon>Cyanophyceae</taxon>
        <taxon>Synechococcales</taxon>
        <taxon>Merismopediaceae</taxon>
        <taxon>Synechocystis</taxon>
    </lineage>
</organism>
<reference key="1">
    <citation type="journal article" date="1996" name="DNA Res.">
        <title>Sequence analysis of the genome of the unicellular cyanobacterium Synechocystis sp. strain PCC6803. II. Sequence determination of the entire genome and assignment of potential protein-coding regions.</title>
        <authorList>
            <person name="Kaneko T."/>
            <person name="Sato S."/>
            <person name="Kotani H."/>
            <person name="Tanaka A."/>
            <person name="Asamizu E."/>
            <person name="Nakamura Y."/>
            <person name="Miyajima N."/>
            <person name="Hirosawa M."/>
            <person name="Sugiura M."/>
            <person name="Sasamoto S."/>
            <person name="Kimura T."/>
            <person name="Hosouchi T."/>
            <person name="Matsuno A."/>
            <person name="Muraki A."/>
            <person name="Nakazaki N."/>
            <person name="Naruo K."/>
            <person name="Okumura S."/>
            <person name="Shimpo S."/>
            <person name="Takeuchi C."/>
            <person name="Wada T."/>
            <person name="Watanabe A."/>
            <person name="Yamada M."/>
            <person name="Yasuda M."/>
            <person name="Tabata S."/>
        </authorList>
    </citation>
    <scope>NUCLEOTIDE SEQUENCE [LARGE SCALE GENOMIC DNA]</scope>
    <source>
        <strain>ATCC 27184 / PCC 6803 / Kazusa</strain>
    </source>
</reference>